<reference key="1">
    <citation type="journal article" date="2008" name="PLoS ONE">
        <title>Environmental adaptation: genomic analysis of the piezotolerant and psychrotolerant deep-sea iron reducing bacterium Shewanella piezotolerans WP3.</title>
        <authorList>
            <person name="Wang F."/>
            <person name="Wang J."/>
            <person name="Jian H."/>
            <person name="Zhang B."/>
            <person name="Li S."/>
            <person name="Wang F."/>
            <person name="Zeng X."/>
            <person name="Gao L."/>
            <person name="Bartlett D.H."/>
            <person name="Yu J."/>
            <person name="Hu S."/>
            <person name="Xiao X."/>
        </authorList>
    </citation>
    <scope>NUCLEOTIDE SEQUENCE [LARGE SCALE GENOMIC DNA]</scope>
    <source>
        <strain>WP3 / JCM 13877</strain>
    </source>
</reference>
<gene>
    <name evidence="1" type="primary">prfA</name>
    <name type="ordered locus">swp_3891</name>
</gene>
<evidence type="ECO:0000255" key="1">
    <source>
        <dbReference type="HAMAP-Rule" id="MF_00093"/>
    </source>
</evidence>
<evidence type="ECO:0000256" key="2">
    <source>
        <dbReference type="SAM" id="MobiDB-lite"/>
    </source>
</evidence>
<keyword id="KW-0963">Cytoplasm</keyword>
<keyword id="KW-0488">Methylation</keyword>
<keyword id="KW-0648">Protein biosynthesis</keyword>
<dbReference type="EMBL" id="CP000472">
    <property type="protein sequence ID" value="ACJ30568.1"/>
    <property type="molecule type" value="Genomic_DNA"/>
</dbReference>
<dbReference type="RefSeq" id="WP_020913910.1">
    <property type="nucleotide sequence ID" value="NC_011566.1"/>
</dbReference>
<dbReference type="SMR" id="B8CQV2"/>
<dbReference type="STRING" id="225849.swp_3891"/>
<dbReference type="KEGG" id="swp:swp_3891"/>
<dbReference type="eggNOG" id="COG0216">
    <property type="taxonomic scope" value="Bacteria"/>
</dbReference>
<dbReference type="HOGENOM" id="CLU_036856_0_1_6"/>
<dbReference type="OrthoDB" id="9806673at2"/>
<dbReference type="Proteomes" id="UP000000753">
    <property type="component" value="Chromosome"/>
</dbReference>
<dbReference type="GO" id="GO:0005737">
    <property type="term" value="C:cytoplasm"/>
    <property type="evidence" value="ECO:0007669"/>
    <property type="project" value="UniProtKB-SubCell"/>
</dbReference>
<dbReference type="GO" id="GO:0016149">
    <property type="term" value="F:translation release factor activity, codon specific"/>
    <property type="evidence" value="ECO:0007669"/>
    <property type="project" value="UniProtKB-UniRule"/>
</dbReference>
<dbReference type="FunFam" id="3.30.160.20:FF:000004">
    <property type="entry name" value="Peptide chain release factor 1"/>
    <property type="match status" value="1"/>
</dbReference>
<dbReference type="FunFam" id="3.30.70.1660:FF:000002">
    <property type="entry name" value="Peptide chain release factor 1"/>
    <property type="match status" value="1"/>
</dbReference>
<dbReference type="FunFam" id="3.30.70.1660:FF:000004">
    <property type="entry name" value="Peptide chain release factor 1"/>
    <property type="match status" value="1"/>
</dbReference>
<dbReference type="Gene3D" id="3.30.160.20">
    <property type="match status" value="1"/>
</dbReference>
<dbReference type="Gene3D" id="3.30.70.1660">
    <property type="match status" value="1"/>
</dbReference>
<dbReference type="Gene3D" id="6.10.140.1950">
    <property type="match status" value="1"/>
</dbReference>
<dbReference type="HAMAP" id="MF_00093">
    <property type="entry name" value="Rel_fac_1"/>
    <property type="match status" value="1"/>
</dbReference>
<dbReference type="InterPro" id="IPR005139">
    <property type="entry name" value="PCRF"/>
</dbReference>
<dbReference type="InterPro" id="IPR000352">
    <property type="entry name" value="Pep_chain_release_fac_I"/>
</dbReference>
<dbReference type="InterPro" id="IPR045853">
    <property type="entry name" value="Pep_chain_release_fac_I_sf"/>
</dbReference>
<dbReference type="InterPro" id="IPR050057">
    <property type="entry name" value="Prokaryotic/Mito_RF"/>
</dbReference>
<dbReference type="InterPro" id="IPR004373">
    <property type="entry name" value="RF-1"/>
</dbReference>
<dbReference type="NCBIfam" id="TIGR00019">
    <property type="entry name" value="prfA"/>
    <property type="match status" value="1"/>
</dbReference>
<dbReference type="NCBIfam" id="NF001859">
    <property type="entry name" value="PRK00591.1"/>
    <property type="match status" value="1"/>
</dbReference>
<dbReference type="PANTHER" id="PTHR43804">
    <property type="entry name" value="LD18447P"/>
    <property type="match status" value="1"/>
</dbReference>
<dbReference type="PANTHER" id="PTHR43804:SF7">
    <property type="entry name" value="LD18447P"/>
    <property type="match status" value="1"/>
</dbReference>
<dbReference type="Pfam" id="PF03462">
    <property type="entry name" value="PCRF"/>
    <property type="match status" value="1"/>
</dbReference>
<dbReference type="Pfam" id="PF00472">
    <property type="entry name" value="RF-1"/>
    <property type="match status" value="1"/>
</dbReference>
<dbReference type="SMART" id="SM00937">
    <property type="entry name" value="PCRF"/>
    <property type="match status" value="1"/>
</dbReference>
<dbReference type="SUPFAM" id="SSF75620">
    <property type="entry name" value="Release factor"/>
    <property type="match status" value="1"/>
</dbReference>
<dbReference type="PROSITE" id="PS00745">
    <property type="entry name" value="RF_PROK_I"/>
    <property type="match status" value="1"/>
</dbReference>
<feature type="chain" id="PRO_1000117253" description="Peptide chain release factor 1">
    <location>
        <begin position="1"/>
        <end position="361"/>
    </location>
</feature>
<feature type="region of interest" description="Disordered" evidence="2">
    <location>
        <begin position="284"/>
        <end position="305"/>
    </location>
</feature>
<feature type="compositionally biased region" description="Basic and acidic residues" evidence="2">
    <location>
        <begin position="284"/>
        <end position="296"/>
    </location>
</feature>
<feature type="modified residue" description="N5-methylglutamine" evidence="1">
    <location>
        <position position="237"/>
    </location>
</feature>
<sequence>MKDSVIRKLEGLLERNEEVLALLSDAGIIADQERFRALSKEYSQLEDVVKAFKSFQQAEEDLESAKEMMEEDDAELKEMAQEEYKAAKETIETLESELQILLLPKDPNDDNNCFIEIRAGAGGDEAAIFAGDLFRMYSKYAESNRWQIEVMNTNEGEHGGFKEVIAKISGEGVYGKLKFESGGHRVQRVPETESQGRVHTSACTVIVLPEIPEAEAIEINKADLKVDTFRASGAGGQHVNKTDSAIRITHIPTGIVVECQDQRSQHKNRAQAMSVLSARIQAVEDEKRRSEEDSTRRNLVSSGDRSERIRTYNFPQGRVSEHRINLTLYRLGEFMEGDIDVVIEPLIQETQADMLAALGEG</sequence>
<protein>
    <recommendedName>
        <fullName evidence="1">Peptide chain release factor 1</fullName>
        <shortName evidence="1">RF-1</shortName>
    </recommendedName>
</protein>
<organism>
    <name type="scientific">Shewanella piezotolerans (strain WP3 / JCM 13877)</name>
    <dbReference type="NCBI Taxonomy" id="225849"/>
    <lineage>
        <taxon>Bacteria</taxon>
        <taxon>Pseudomonadati</taxon>
        <taxon>Pseudomonadota</taxon>
        <taxon>Gammaproteobacteria</taxon>
        <taxon>Alteromonadales</taxon>
        <taxon>Shewanellaceae</taxon>
        <taxon>Shewanella</taxon>
    </lineage>
</organism>
<proteinExistence type="inferred from homology"/>
<accession>B8CQV2</accession>
<name>RF1_SHEPW</name>
<comment type="function">
    <text evidence="1">Peptide chain release factor 1 directs the termination of translation in response to the peptide chain termination codons UAG and UAA.</text>
</comment>
<comment type="subcellular location">
    <subcellularLocation>
        <location evidence="1">Cytoplasm</location>
    </subcellularLocation>
</comment>
<comment type="PTM">
    <text evidence="1">Methylated by PrmC. Methylation increases the termination efficiency of RF1.</text>
</comment>
<comment type="similarity">
    <text evidence="1">Belongs to the prokaryotic/mitochondrial release factor family.</text>
</comment>